<accession>Q49V29</accession>
<dbReference type="EC" id="4.3.3.6" evidence="1"/>
<dbReference type="EC" id="3.5.1.2" evidence="1"/>
<dbReference type="EMBL" id="AP008934">
    <property type="protein sequence ID" value="BAE19381.1"/>
    <property type="molecule type" value="Genomic_DNA"/>
</dbReference>
<dbReference type="RefSeq" id="WP_011303856.1">
    <property type="nucleotide sequence ID" value="NZ_MTGA01000039.1"/>
</dbReference>
<dbReference type="SMR" id="Q49V29"/>
<dbReference type="GeneID" id="66868390"/>
<dbReference type="KEGG" id="ssp:SSP2236"/>
<dbReference type="eggNOG" id="COG0311">
    <property type="taxonomic scope" value="Bacteria"/>
</dbReference>
<dbReference type="HOGENOM" id="CLU_069674_2_0_9"/>
<dbReference type="OrthoDB" id="9810320at2"/>
<dbReference type="UniPathway" id="UPA00245"/>
<dbReference type="Proteomes" id="UP000006371">
    <property type="component" value="Chromosome"/>
</dbReference>
<dbReference type="GO" id="GO:0005829">
    <property type="term" value="C:cytosol"/>
    <property type="evidence" value="ECO:0007669"/>
    <property type="project" value="TreeGrafter"/>
</dbReference>
<dbReference type="GO" id="GO:1903600">
    <property type="term" value="C:glutaminase complex"/>
    <property type="evidence" value="ECO:0007669"/>
    <property type="project" value="TreeGrafter"/>
</dbReference>
<dbReference type="GO" id="GO:0004359">
    <property type="term" value="F:glutaminase activity"/>
    <property type="evidence" value="ECO:0007669"/>
    <property type="project" value="UniProtKB-UniRule"/>
</dbReference>
<dbReference type="GO" id="GO:0036381">
    <property type="term" value="F:pyridoxal 5'-phosphate synthase (glutamine hydrolysing) activity"/>
    <property type="evidence" value="ECO:0007669"/>
    <property type="project" value="UniProtKB-UniRule"/>
</dbReference>
<dbReference type="GO" id="GO:0006543">
    <property type="term" value="P:glutamine catabolic process"/>
    <property type="evidence" value="ECO:0007669"/>
    <property type="project" value="UniProtKB-UniRule"/>
</dbReference>
<dbReference type="GO" id="GO:0042823">
    <property type="term" value="P:pyridoxal phosphate biosynthetic process"/>
    <property type="evidence" value="ECO:0007669"/>
    <property type="project" value="UniProtKB-UniRule"/>
</dbReference>
<dbReference type="GO" id="GO:0008614">
    <property type="term" value="P:pyridoxine metabolic process"/>
    <property type="evidence" value="ECO:0007669"/>
    <property type="project" value="TreeGrafter"/>
</dbReference>
<dbReference type="CDD" id="cd01749">
    <property type="entry name" value="GATase1_PB"/>
    <property type="match status" value="1"/>
</dbReference>
<dbReference type="FunFam" id="3.40.50.880:FF:000010">
    <property type="entry name" value="uncharacterized protein LOC100176842 isoform X2"/>
    <property type="match status" value="1"/>
</dbReference>
<dbReference type="Gene3D" id="3.40.50.880">
    <property type="match status" value="1"/>
</dbReference>
<dbReference type="HAMAP" id="MF_01615">
    <property type="entry name" value="PdxT"/>
    <property type="match status" value="1"/>
</dbReference>
<dbReference type="InterPro" id="IPR029062">
    <property type="entry name" value="Class_I_gatase-like"/>
</dbReference>
<dbReference type="InterPro" id="IPR002161">
    <property type="entry name" value="PdxT/SNO"/>
</dbReference>
<dbReference type="InterPro" id="IPR021196">
    <property type="entry name" value="PdxT/SNO_CS"/>
</dbReference>
<dbReference type="NCBIfam" id="TIGR03800">
    <property type="entry name" value="PLP_synth_Pdx2"/>
    <property type="match status" value="1"/>
</dbReference>
<dbReference type="PANTHER" id="PTHR31559">
    <property type="entry name" value="PYRIDOXAL 5'-PHOSPHATE SYNTHASE SUBUNIT SNO"/>
    <property type="match status" value="1"/>
</dbReference>
<dbReference type="PANTHER" id="PTHR31559:SF0">
    <property type="entry name" value="PYRIDOXAL 5'-PHOSPHATE SYNTHASE SUBUNIT SNO1-RELATED"/>
    <property type="match status" value="1"/>
</dbReference>
<dbReference type="Pfam" id="PF01174">
    <property type="entry name" value="SNO"/>
    <property type="match status" value="1"/>
</dbReference>
<dbReference type="PIRSF" id="PIRSF005639">
    <property type="entry name" value="Glut_amidoT_SNO"/>
    <property type="match status" value="1"/>
</dbReference>
<dbReference type="SUPFAM" id="SSF52317">
    <property type="entry name" value="Class I glutamine amidotransferase-like"/>
    <property type="match status" value="1"/>
</dbReference>
<dbReference type="PROSITE" id="PS01236">
    <property type="entry name" value="PDXT_SNO_1"/>
    <property type="match status" value="1"/>
</dbReference>
<dbReference type="PROSITE" id="PS51130">
    <property type="entry name" value="PDXT_SNO_2"/>
    <property type="match status" value="1"/>
</dbReference>
<sequence length="191" mass="21104">MKIGVLALQGAVREHIHHIELSGHEGVAIKRIEQLEEIDGLILPGGESTTLRRLMNLYGFKEALQQSTLPMFGTCAGLIVMAKQISGEDGYLDKLDITVQRNSFGRQVDSFESELDVKGIAEDIEGVFIRAPHIEATHGDVDVLSTVGDKIVAVQEGRYLGVSFHPELTDDYRVTQYFIEAIVKPTLTEKV</sequence>
<feature type="chain" id="PRO_0000135664" description="Pyridoxal 5'-phosphate synthase subunit PdxT">
    <location>
        <begin position="1"/>
        <end position="191"/>
    </location>
</feature>
<feature type="active site" description="Nucleophile" evidence="1">
    <location>
        <position position="75"/>
    </location>
</feature>
<feature type="active site" description="Charge relay system" evidence="1">
    <location>
        <position position="165"/>
    </location>
</feature>
<feature type="active site" description="Charge relay system" evidence="1">
    <location>
        <position position="167"/>
    </location>
</feature>
<feature type="binding site" evidence="1">
    <location>
        <begin position="46"/>
        <end position="48"/>
    </location>
    <ligand>
        <name>L-glutamine</name>
        <dbReference type="ChEBI" id="CHEBI:58359"/>
    </ligand>
</feature>
<feature type="binding site" evidence="1">
    <location>
        <position position="101"/>
    </location>
    <ligand>
        <name>L-glutamine</name>
        <dbReference type="ChEBI" id="CHEBI:58359"/>
    </ligand>
</feature>
<feature type="binding site" evidence="1">
    <location>
        <begin position="129"/>
        <end position="130"/>
    </location>
    <ligand>
        <name>L-glutamine</name>
        <dbReference type="ChEBI" id="CHEBI:58359"/>
    </ligand>
</feature>
<keyword id="KW-0315">Glutamine amidotransferase</keyword>
<keyword id="KW-0378">Hydrolase</keyword>
<keyword id="KW-0456">Lyase</keyword>
<keyword id="KW-0663">Pyridoxal phosphate</keyword>
<keyword id="KW-1185">Reference proteome</keyword>
<proteinExistence type="inferred from homology"/>
<name>PDXT_STAS1</name>
<protein>
    <recommendedName>
        <fullName evidence="1">Pyridoxal 5'-phosphate synthase subunit PdxT</fullName>
        <ecNumber evidence="1">4.3.3.6</ecNumber>
    </recommendedName>
    <alternativeName>
        <fullName evidence="1">Pdx2</fullName>
    </alternativeName>
    <alternativeName>
        <fullName evidence="1">Pyridoxal 5'-phosphate synthase glutaminase subunit</fullName>
        <ecNumber evidence="1">3.5.1.2</ecNumber>
    </alternativeName>
</protein>
<evidence type="ECO:0000255" key="1">
    <source>
        <dbReference type="HAMAP-Rule" id="MF_01615"/>
    </source>
</evidence>
<gene>
    <name evidence="1" type="primary">pdxT</name>
    <name type="ordered locus">SSP2236</name>
</gene>
<organism>
    <name type="scientific">Staphylococcus saprophyticus subsp. saprophyticus (strain ATCC 15305 / DSM 20229 / NCIMB 8711 / NCTC 7292 / S-41)</name>
    <dbReference type="NCBI Taxonomy" id="342451"/>
    <lineage>
        <taxon>Bacteria</taxon>
        <taxon>Bacillati</taxon>
        <taxon>Bacillota</taxon>
        <taxon>Bacilli</taxon>
        <taxon>Bacillales</taxon>
        <taxon>Staphylococcaceae</taxon>
        <taxon>Staphylococcus</taxon>
    </lineage>
</organism>
<comment type="function">
    <text evidence="1">Catalyzes the hydrolysis of glutamine to glutamate and ammonia as part of the biosynthesis of pyridoxal 5'-phosphate. The resulting ammonia molecule is channeled to the active site of PdxS.</text>
</comment>
<comment type="catalytic activity">
    <reaction evidence="1">
        <text>aldehydo-D-ribose 5-phosphate + D-glyceraldehyde 3-phosphate + L-glutamine = pyridoxal 5'-phosphate + L-glutamate + phosphate + 3 H2O + H(+)</text>
        <dbReference type="Rhea" id="RHEA:31507"/>
        <dbReference type="ChEBI" id="CHEBI:15377"/>
        <dbReference type="ChEBI" id="CHEBI:15378"/>
        <dbReference type="ChEBI" id="CHEBI:29985"/>
        <dbReference type="ChEBI" id="CHEBI:43474"/>
        <dbReference type="ChEBI" id="CHEBI:58273"/>
        <dbReference type="ChEBI" id="CHEBI:58359"/>
        <dbReference type="ChEBI" id="CHEBI:59776"/>
        <dbReference type="ChEBI" id="CHEBI:597326"/>
        <dbReference type="EC" id="4.3.3.6"/>
    </reaction>
</comment>
<comment type="catalytic activity">
    <reaction evidence="1">
        <text>L-glutamine + H2O = L-glutamate + NH4(+)</text>
        <dbReference type="Rhea" id="RHEA:15889"/>
        <dbReference type="ChEBI" id="CHEBI:15377"/>
        <dbReference type="ChEBI" id="CHEBI:28938"/>
        <dbReference type="ChEBI" id="CHEBI:29985"/>
        <dbReference type="ChEBI" id="CHEBI:58359"/>
        <dbReference type="EC" id="3.5.1.2"/>
    </reaction>
</comment>
<comment type="pathway">
    <text evidence="1">Cofactor biosynthesis; pyridoxal 5'-phosphate biosynthesis.</text>
</comment>
<comment type="subunit">
    <text evidence="1">In the presence of PdxS, forms a dodecamer of heterodimers. Only shows activity in the heterodimer.</text>
</comment>
<comment type="similarity">
    <text evidence="1">Belongs to the glutaminase PdxT/SNO family.</text>
</comment>
<reference key="1">
    <citation type="journal article" date="2005" name="Proc. Natl. Acad. Sci. U.S.A.">
        <title>Whole genome sequence of Staphylococcus saprophyticus reveals the pathogenesis of uncomplicated urinary tract infection.</title>
        <authorList>
            <person name="Kuroda M."/>
            <person name="Yamashita A."/>
            <person name="Hirakawa H."/>
            <person name="Kumano M."/>
            <person name="Morikawa K."/>
            <person name="Higashide M."/>
            <person name="Maruyama A."/>
            <person name="Inose Y."/>
            <person name="Matoba K."/>
            <person name="Toh H."/>
            <person name="Kuhara S."/>
            <person name="Hattori M."/>
            <person name="Ohta T."/>
        </authorList>
    </citation>
    <scope>NUCLEOTIDE SEQUENCE [LARGE SCALE GENOMIC DNA]</scope>
    <source>
        <strain>ATCC 15305 / DSM 20229 / NCIMB 8711 / NCTC 7292 / S-41</strain>
    </source>
</reference>